<protein>
    <recommendedName>
        <fullName evidence="2 10">tRNA-dihydrouridine(16) synthase</fullName>
        <ecNumber evidence="2 5">1.3.1.-</ecNumber>
    </recommendedName>
    <alternativeName>
        <fullName evidence="2 7">U16-specific dihydrouridine synthase</fullName>
        <shortName evidence="2 7">U16-specific Dus</shortName>
    </alternativeName>
    <alternativeName>
        <fullName evidence="2 6">tRNA-dihydrouridine synthase C</fullName>
    </alternativeName>
</protein>
<keyword id="KW-0002">3D-structure</keyword>
<keyword id="KW-0285">Flavoprotein</keyword>
<keyword id="KW-0288">FMN</keyword>
<keyword id="KW-0521">NADP</keyword>
<keyword id="KW-0560">Oxidoreductase</keyword>
<keyword id="KW-1185">Reference proteome</keyword>
<keyword id="KW-0694">RNA-binding</keyword>
<keyword id="KW-0819">tRNA processing</keyword>
<keyword id="KW-0820">tRNA-binding</keyword>
<dbReference type="EC" id="1.3.1.-" evidence="2 5"/>
<dbReference type="EMBL" id="U00007">
    <property type="protein sequence ID" value="AAA60503.1"/>
    <property type="molecule type" value="Genomic_DNA"/>
</dbReference>
<dbReference type="EMBL" id="U00096">
    <property type="protein sequence ID" value="AAC75201.1"/>
    <property type="molecule type" value="Genomic_DNA"/>
</dbReference>
<dbReference type="EMBL" id="AP009048">
    <property type="protein sequence ID" value="BAE76617.1"/>
    <property type="molecule type" value="Genomic_DNA"/>
</dbReference>
<dbReference type="PIR" id="C64982">
    <property type="entry name" value="C64982"/>
</dbReference>
<dbReference type="RefSeq" id="NP_416645.1">
    <property type="nucleotide sequence ID" value="NC_000913.3"/>
</dbReference>
<dbReference type="RefSeq" id="WP_001264861.1">
    <property type="nucleotide sequence ID" value="NZ_SSZK01000011.1"/>
</dbReference>
<dbReference type="PDB" id="3W9Z">
    <property type="method" value="X-ray"/>
    <property type="resolution" value="2.10 A"/>
    <property type="chains" value="A=1-315"/>
</dbReference>
<dbReference type="PDB" id="4BF9">
    <property type="method" value="X-ray"/>
    <property type="resolution" value="2.60 A"/>
    <property type="chains" value="A=1-315"/>
</dbReference>
<dbReference type="PDB" id="4BFA">
    <property type="method" value="X-ray"/>
    <property type="resolution" value="1.65 A"/>
    <property type="chains" value="A/B=1-315"/>
</dbReference>
<dbReference type="PDB" id="4YCO">
    <property type="method" value="X-ray"/>
    <property type="resolution" value="2.10 A"/>
    <property type="chains" value="A/B/C=1-315"/>
</dbReference>
<dbReference type="PDB" id="4YCP">
    <property type="method" value="X-ray"/>
    <property type="resolution" value="2.55 A"/>
    <property type="chains" value="A=1-315"/>
</dbReference>
<dbReference type="PDBsum" id="3W9Z"/>
<dbReference type="PDBsum" id="4BF9"/>
<dbReference type="PDBsum" id="4BFA"/>
<dbReference type="PDBsum" id="4YCO"/>
<dbReference type="PDBsum" id="4YCP"/>
<dbReference type="SMR" id="P33371"/>
<dbReference type="BioGRID" id="4260457">
    <property type="interactions" value="13"/>
</dbReference>
<dbReference type="DIP" id="DIP-12808N"/>
<dbReference type="FunCoup" id="P33371">
    <property type="interactions" value="165"/>
</dbReference>
<dbReference type="IntAct" id="P33371">
    <property type="interactions" value="24"/>
</dbReference>
<dbReference type="STRING" id="511145.b2140"/>
<dbReference type="jPOST" id="P33371"/>
<dbReference type="PaxDb" id="511145-b2140"/>
<dbReference type="EnsemblBacteria" id="AAC75201">
    <property type="protein sequence ID" value="AAC75201"/>
    <property type="gene ID" value="b2140"/>
</dbReference>
<dbReference type="GeneID" id="945458"/>
<dbReference type="KEGG" id="ecj:JW2128"/>
<dbReference type="KEGG" id="eco:b2140"/>
<dbReference type="KEGG" id="ecoc:C3026_11995"/>
<dbReference type="PATRIC" id="fig|1411691.4.peg.102"/>
<dbReference type="EchoBASE" id="EB1957"/>
<dbReference type="eggNOG" id="COG0042">
    <property type="taxonomic scope" value="Bacteria"/>
</dbReference>
<dbReference type="HOGENOM" id="CLU_013299_0_4_6"/>
<dbReference type="InParanoid" id="P33371"/>
<dbReference type="OMA" id="YRPPAHW"/>
<dbReference type="OrthoDB" id="9764501at2"/>
<dbReference type="PhylomeDB" id="P33371"/>
<dbReference type="BioCyc" id="EcoCyc:EG12022-MONOMER"/>
<dbReference type="BioCyc" id="MetaCyc:EG12022-MONOMER"/>
<dbReference type="BRENDA" id="1.3.1.91">
    <property type="organism ID" value="2026"/>
</dbReference>
<dbReference type="EvolutionaryTrace" id="P33371"/>
<dbReference type="PRO" id="PR:P33371"/>
<dbReference type="Proteomes" id="UP000000625">
    <property type="component" value="Chromosome"/>
</dbReference>
<dbReference type="GO" id="GO:0050660">
    <property type="term" value="F:flavin adenine dinucleotide binding"/>
    <property type="evidence" value="ECO:0007669"/>
    <property type="project" value="InterPro"/>
</dbReference>
<dbReference type="GO" id="GO:0010181">
    <property type="term" value="F:FMN binding"/>
    <property type="evidence" value="ECO:0000314"/>
    <property type="project" value="UniProtKB"/>
</dbReference>
<dbReference type="GO" id="GO:0000049">
    <property type="term" value="F:tRNA binding"/>
    <property type="evidence" value="ECO:0000314"/>
    <property type="project" value="UniProtKB"/>
</dbReference>
<dbReference type="GO" id="GO:0017150">
    <property type="term" value="F:tRNA dihydrouridine synthase activity"/>
    <property type="evidence" value="ECO:0000314"/>
    <property type="project" value="UniProtKB"/>
</dbReference>
<dbReference type="GO" id="GO:0102262">
    <property type="term" value="F:tRNA-dihydrouridine16 synthase activity"/>
    <property type="evidence" value="ECO:0007669"/>
    <property type="project" value="RHEA"/>
</dbReference>
<dbReference type="GO" id="GO:0002943">
    <property type="term" value="P:tRNA dihydrouridine synthesis"/>
    <property type="evidence" value="ECO:0000314"/>
    <property type="project" value="UniProtKB"/>
</dbReference>
<dbReference type="CDD" id="cd02801">
    <property type="entry name" value="DUS_like_FMN"/>
    <property type="match status" value="1"/>
</dbReference>
<dbReference type="FunFam" id="3.20.20.70:FF:000119">
    <property type="entry name" value="tRNA-dihydrouridine(16) synthase"/>
    <property type="match status" value="1"/>
</dbReference>
<dbReference type="Gene3D" id="3.20.20.70">
    <property type="entry name" value="Aldolase class I"/>
    <property type="match status" value="1"/>
</dbReference>
<dbReference type="Gene3D" id="1.20.225.30">
    <property type="entry name" value="Dihydrouridine synthase, C-terminal recognition domain"/>
    <property type="match status" value="1"/>
</dbReference>
<dbReference type="HAMAP" id="MF_02043">
    <property type="entry name" value="DusC_subfam"/>
    <property type="match status" value="1"/>
</dbReference>
<dbReference type="InterPro" id="IPR013785">
    <property type="entry name" value="Aldolase_TIM"/>
</dbReference>
<dbReference type="InterPro" id="IPR035587">
    <property type="entry name" value="DUS-like_FMN-bd"/>
</dbReference>
<dbReference type="InterPro" id="IPR001269">
    <property type="entry name" value="DUS_fam"/>
</dbReference>
<dbReference type="InterPro" id="IPR032886">
    <property type="entry name" value="DusC"/>
</dbReference>
<dbReference type="InterPro" id="IPR042270">
    <property type="entry name" value="DusC_C"/>
</dbReference>
<dbReference type="InterPro" id="IPR018517">
    <property type="entry name" value="tRNA_hU_synthase_CS"/>
</dbReference>
<dbReference type="NCBIfam" id="NF007838">
    <property type="entry name" value="PRK10550.1"/>
    <property type="match status" value="1"/>
</dbReference>
<dbReference type="PANTHER" id="PTHR11082">
    <property type="entry name" value="TRNA-DIHYDROURIDINE SYNTHASE"/>
    <property type="match status" value="1"/>
</dbReference>
<dbReference type="PANTHER" id="PTHR11082:SF26">
    <property type="entry name" value="TRNA-DIHYDROURIDINE(16) SYNTHASE"/>
    <property type="match status" value="1"/>
</dbReference>
<dbReference type="Pfam" id="PF01207">
    <property type="entry name" value="Dus"/>
    <property type="match status" value="1"/>
</dbReference>
<dbReference type="PIRSF" id="PIRSF006621">
    <property type="entry name" value="Dus"/>
    <property type="match status" value="1"/>
</dbReference>
<dbReference type="SUPFAM" id="SSF51395">
    <property type="entry name" value="FMN-linked oxidoreductases"/>
    <property type="match status" value="1"/>
</dbReference>
<dbReference type="PROSITE" id="PS01136">
    <property type="entry name" value="UPF0034"/>
    <property type="match status" value="1"/>
</dbReference>
<evidence type="ECO:0000250" key="1">
    <source>
        <dbReference type="UniProtKB" id="Q5SMC7"/>
    </source>
</evidence>
<evidence type="ECO:0000255" key="2">
    <source>
        <dbReference type="HAMAP-Rule" id="MF_02043"/>
    </source>
</evidence>
<evidence type="ECO:0000269" key="3">
    <source>
    </source>
</evidence>
<evidence type="ECO:0000269" key="4">
    <source>
    </source>
</evidence>
<evidence type="ECO:0000269" key="5">
    <source>
    </source>
</evidence>
<evidence type="ECO:0000303" key="6">
    <source>
    </source>
</evidence>
<evidence type="ECO:0000303" key="7">
    <source>
    </source>
</evidence>
<evidence type="ECO:0000305" key="8"/>
<evidence type="ECO:0000305" key="9">
    <source>
    </source>
</evidence>
<evidence type="ECO:0000305" key="10">
    <source>
    </source>
</evidence>
<evidence type="ECO:0007744" key="11">
    <source>
        <dbReference type="PDB" id="3W9Z"/>
    </source>
</evidence>
<evidence type="ECO:0007744" key="12">
    <source>
        <dbReference type="PDB" id="4BF9"/>
    </source>
</evidence>
<evidence type="ECO:0007744" key="13">
    <source>
        <dbReference type="PDB" id="4BFA"/>
    </source>
</evidence>
<evidence type="ECO:0007829" key="14">
    <source>
        <dbReference type="PDB" id="4BFA"/>
    </source>
</evidence>
<comment type="function">
    <text evidence="2 3 5">Catalyzes the synthesis of 5,6-dihydrouridine (D), a modified base found in the D-loop of most tRNAs, via the reduction of the C5-C6 double bond in target uridines. DusC specifically modifies U16 in tRNAs.</text>
</comment>
<comment type="catalytic activity">
    <reaction evidence="2 5">
        <text>5,6-dihydrouridine(16) in tRNA + NADP(+) = uridine(16) in tRNA + NADPH + H(+)</text>
        <dbReference type="Rhea" id="RHEA:53376"/>
        <dbReference type="Rhea" id="RHEA-COMP:13543"/>
        <dbReference type="Rhea" id="RHEA-COMP:13544"/>
        <dbReference type="ChEBI" id="CHEBI:15378"/>
        <dbReference type="ChEBI" id="CHEBI:57783"/>
        <dbReference type="ChEBI" id="CHEBI:58349"/>
        <dbReference type="ChEBI" id="CHEBI:65315"/>
        <dbReference type="ChEBI" id="CHEBI:74443"/>
    </reaction>
</comment>
<comment type="catalytic activity">
    <reaction evidence="2 5">
        <text>5,6-dihydrouridine(16) in tRNA + NAD(+) = uridine(16) in tRNA + NADH + H(+)</text>
        <dbReference type="Rhea" id="RHEA:53380"/>
        <dbReference type="Rhea" id="RHEA-COMP:13543"/>
        <dbReference type="Rhea" id="RHEA-COMP:13544"/>
        <dbReference type="ChEBI" id="CHEBI:15378"/>
        <dbReference type="ChEBI" id="CHEBI:57540"/>
        <dbReference type="ChEBI" id="CHEBI:57945"/>
        <dbReference type="ChEBI" id="CHEBI:65315"/>
        <dbReference type="ChEBI" id="CHEBI:74443"/>
    </reaction>
</comment>
<comment type="cofactor">
    <cofactor evidence="2 9 10">
        <name>FMN</name>
        <dbReference type="ChEBI" id="CHEBI:58210"/>
    </cofactor>
</comment>
<comment type="domain">
    <text evidence="9 10">Is composed of two domains: an N-terminal catalytic domain (residues 1-242) and a C-terminal tRNA recognition domain (residues 245-309).</text>
</comment>
<comment type="disruption phenotype">
    <text evidence="3">A dusA dusB dusC triple mutant exhibits a complete lack of 5,6-dihydrouridine modification in cellular tRNA, whereas each single mutant exhibits a partial reduction, compared to wild type.</text>
</comment>
<comment type="miscellaneous">
    <text evidence="3">DusB and DusC together account for about half of the 5,6-dihydrouridine modification observed in wild-type cellular tRNA, and DusA accounts for the other half. These three enzymes seem to act site-specifically on the tRNA D-loop and contain nonredundant catalytic functions in vivo.</text>
</comment>
<comment type="similarity">
    <text evidence="2 8">Belongs to the Dus family. DusC subfamily.</text>
</comment>
<feature type="chain" id="PRO_0000162109" description="tRNA-dihydrouridine(16) synthase">
    <location>
        <begin position="1"/>
        <end position="315"/>
    </location>
</feature>
<feature type="active site" description="Proton donor" evidence="1 10">
    <location>
        <position position="98"/>
    </location>
</feature>
<feature type="binding site" evidence="4 5 11 12 13">
    <location>
        <begin position="7"/>
        <end position="9"/>
    </location>
    <ligand>
        <name>FMN</name>
        <dbReference type="ChEBI" id="CHEBI:58210"/>
    </ligand>
</feature>
<feature type="binding site" evidence="4 5 11 12 13">
    <location>
        <position position="68"/>
    </location>
    <ligand>
        <name>FMN</name>
        <dbReference type="ChEBI" id="CHEBI:58210"/>
    </ligand>
</feature>
<feature type="binding site" evidence="4 5 11 12 13">
    <location>
        <position position="139"/>
    </location>
    <ligand>
        <name>FMN</name>
        <dbReference type="ChEBI" id="CHEBI:58210"/>
    </ligand>
</feature>
<feature type="binding site" evidence="4 5 11 12 13">
    <location>
        <begin position="200"/>
        <end position="202"/>
    </location>
    <ligand>
        <name>FMN</name>
        <dbReference type="ChEBI" id="CHEBI:58210"/>
    </ligand>
</feature>
<feature type="binding site" evidence="4 5 11 12 13">
    <location>
        <begin position="224"/>
        <end position="225"/>
    </location>
    <ligand>
        <name>FMN</name>
        <dbReference type="ChEBI" id="CHEBI:58210"/>
    </ligand>
</feature>
<feature type="site" description="Interacts with tRNA; defines subfamily-specific binding signature" evidence="5">
    <location>
        <position position="35"/>
    </location>
</feature>
<feature type="site" description="Interacts with tRNA" evidence="5">
    <location>
        <position position="95"/>
    </location>
</feature>
<feature type="site" description="Interacts with tRNA" evidence="5">
    <location>
        <position position="176"/>
    </location>
</feature>
<feature type="site" description="Interacts with tRNA; defines subfamily-specific binding signature" evidence="5">
    <location>
        <position position="272"/>
    </location>
</feature>
<feature type="site" description="Interacts with tRNA; defines subfamily-specific binding signature" evidence="5">
    <location>
        <position position="274"/>
    </location>
</feature>
<feature type="site" description="Interacts with tRNA" evidence="5">
    <location>
        <position position="279"/>
    </location>
</feature>
<feature type="site" description="Interacts with tRNA; defines subfamily-specific binding signature" evidence="5">
    <location>
        <position position="295"/>
    </location>
</feature>
<feature type="mutagenesis site" description="Loss of enzymatic activity." evidence="5">
    <original>C</original>
    <variation>A</variation>
    <location>
        <position position="98"/>
    </location>
</feature>
<feature type="strand" evidence="14">
    <location>
        <begin position="2"/>
        <end position="5"/>
    </location>
</feature>
<feature type="turn" evidence="14">
    <location>
        <begin position="9"/>
        <end position="11"/>
    </location>
</feature>
<feature type="helix" evidence="14">
    <location>
        <begin position="14"/>
        <end position="22"/>
    </location>
</feature>
<feature type="strand" evidence="14">
    <location>
        <begin position="27"/>
        <end position="35"/>
    </location>
</feature>
<feature type="strand" evidence="14">
    <location>
        <begin position="37"/>
        <end position="39"/>
    </location>
</feature>
<feature type="helix" evidence="14">
    <location>
        <begin position="43"/>
        <end position="49"/>
    </location>
</feature>
<feature type="helix" evidence="14">
    <location>
        <begin position="51"/>
        <end position="55"/>
    </location>
</feature>
<feature type="strand" evidence="14">
    <location>
        <begin position="64"/>
        <end position="70"/>
    </location>
</feature>
<feature type="helix" evidence="14">
    <location>
        <begin position="74"/>
        <end position="86"/>
    </location>
</feature>
<feature type="strand" evidence="14">
    <location>
        <begin position="90"/>
        <end position="98"/>
    </location>
</feature>
<feature type="helix" evidence="14">
    <location>
        <begin position="109"/>
        <end position="114"/>
    </location>
</feature>
<feature type="helix" evidence="14">
    <location>
        <begin position="116"/>
        <end position="129"/>
    </location>
</feature>
<feature type="strand" evidence="14">
    <location>
        <begin position="136"/>
        <end position="142"/>
    </location>
</feature>
<feature type="strand" evidence="14">
    <location>
        <begin position="144"/>
        <end position="147"/>
    </location>
</feature>
<feature type="helix" evidence="14">
    <location>
        <begin position="150"/>
        <end position="159"/>
    </location>
</feature>
<feature type="strand" evidence="14">
    <location>
        <begin position="163"/>
        <end position="170"/>
    </location>
</feature>
<feature type="turn" evidence="14">
    <location>
        <begin position="173"/>
        <end position="176"/>
    </location>
</feature>
<feature type="helix" evidence="14">
    <location>
        <begin position="178"/>
        <end position="180"/>
    </location>
</feature>
<feature type="helix" evidence="14">
    <location>
        <begin position="183"/>
        <end position="192"/>
    </location>
</feature>
<feature type="strand" evidence="14">
    <location>
        <begin position="197"/>
        <end position="201"/>
    </location>
</feature>
<feature type="helix" evidence="14">
    <location>
        <begin position="206"/>
        <end position="216"/>
    </location>
</feature>
<feature type="strand" evidence="14">
    <location>
        <begin position="219"/>
        <end position="224"/>
    </location>
</feature>
<feature type="helix" evidence="14">
    <location>
        <begin position="225"/>
        <end position="229"/>
    </location>
</feature>
<feature type="helix" evidence="14">
    <location>
        <begin position="233"/>
        <end position="239"/>
    </location>
</feature>
<feature type="helix" evidence="14">
    <location>
        <begin position="246"/>
        <end position="258"/>
    </location>
</feature>
<feature type="helix" evidence="14">
    <location>
        <begin position="268"/>
        <end position="280"/>
    </location>
</feature>
<feature type="turn" evidence="14">
    <location>
        <begin position="281"/>
        <end position="283"/>
    </location>
</feature>
<feature type="helix" evidence="14">
    <location>
        <begin position="285"/>
        <end position="294"/>
    </location>
</feature>
<feature type="helix" evidence="14">
    <location>
        <begin position="300"/>
        <end position="309"/>
    </location>
</feature>
<feature type="turn" evidence="14">
    <location>
        <begin position="312"/>
        <end position="314"/>
    </location>
</feature>
<organism>
    <name type="scientific">Escherichia coli (strain K12)</name>
    <dbReference type="NCBI Taxonomy" id="83333"/>
    <lineage>
        <taxon>Bacteria</taxon>
        <taxon>Pseudomonadati</taxon>
        <taxon>Pseudomonadota</taxon>
        <taxon>Gammaproteobacteria</taxon>
        <taxon>Enterobacterales</taxon>
        <taxon>Enterobacteriaceae</taxon>
        <taxon>Escherichia</taxon>
    </lineage>
</organism>
<reference key="1">
    <citation type="submission" date="1993-10" db="EMBL/GenBank/DDBJ databases">
        <title>Automated multiplex sequencing of the E.coli genome.</title>
        <authorList>
            <person name="Richterich P."/>
            <person name="Lakey N."/>
            <person name="Gryan G."/>
            <person name="Jaehn L."/>
            <person name="Mintz L."/>
            <person name="Robison K."/>
            <person name="Church G.M."/>
        </authorList>
    </citation>
    <scope>NUCLEOTIDE SEQUENCE [LARGE SCALE GENOMIC DNA]</scope>
    <source>
        <strain>K12 / BHB2600</strain>
    </source>
</reference>
<reference key="2">
    <citation type="journal article" date="1997" name="Science">
        <title>The complete genome sequence of Escherichia coli K-12.</title>
        <authorList>
            <person name="Blattner F.R."/>
            <person name="Plunkett G. III"/>
            <person name="Bloch C.A."/>
            <person name="Perna N.T."/>
            <person name="Burland V."/>
            <person name="Riley M."/>
            <person name="Collado-Vides J."/>
            <person name="Glasner J.D."/>
            <person name="Rode C.K."/>
            <person name="Mayhew G.F."/>
            <person name="Gregor J."/>
            <person name="Davis N.W."/>
            <person name="Kirkpatrick H.A."/>
            <person name="Goeden M.A."/>
            <person name="Rose D.J."/>
            <person name="Mau B."/>
            <person name="Shao Y."/>
        </authorList>
    </citation>
    <scope>NUCLEOTIDE SEQUENCE [LARGE SCALE GENOMIC DNA]</scope>
    <source>
        <strain>K12 / MG1655 / ATCC 47076</strain>
    </source>
</reference>
<reference key="3">
    <citation type="journal article" date="2006" name="Mol. Syst. Biol.">
        <title>Highly accurate genome sequences of Escherichia coli K-12 strains MG1655 and W3110.</title>
        <authorList>
            <person name="Hayashi K."/>
            <person name="Morooka N."/>
            <person name="Yamamoto Y."/>
            <person name="Fujita K."/>
            <person name="Isono K."/>
            <person name="Choi S."/>
            <person name="Ohtsubo E."/>
            <person name="Baba T."/>
            <person name="Wanner B.L."/>
            <person name="Mori H."/>
            <person name="Horiuchi T."/>
        </authorList>
    </citation>
    <scope>NUCLEOTIDE SEQUENCE [LARGE SCALE GENOMIC DNA]</scope>
    <source>
        <strain>K12 / W3110 / ATCC 27325 / DSM 5911</strain>
    </source>
</reference>
<reference key="4">
    <citation type="journal article" date="2002" name="J. Biol. Chem.">
        <title>Identification of the tRNA-dihydrouridine synthase family.</title>
        <authorList>
            <person name="Bishop A.C."/>
            <person name="Xu J."/>
            <person name="Johnson R.C."/>
            <person name="Schimmel P."/>
            <person name="de Crecy-Lagard V."/>
        </authorList>
    </citation>
    <scope>FUNCTION</scope>
    <scope>DISRUPTION PHENOTYPE</scope>
    <source>
        <strain>K12</strain>
    </source>
</reference>
<reference key="5">
    <citation type="journal article" date="2013" name="Acta Crystallogr. F">
        <title>Structure of dihydrouridine synthase C (DusC) from Escherichia coli.</title>
        <authorList>
            <person name="Chen M."/>
            <person name="Yu J."/>
            <person name="Tanaka Y."/>
            <person name="Tanaka M."/>
            <person name="Tanaka I."/>
            <person name="Yao M."/>
        </authorList>
    </citation>
    <scope>X-RAY CRYSTALLOGRAPHY (2.10 ANGSTROMS) IN COMPLEX WITH FMN</scope>
    <scope>DOMAIN</scope>
</reference>
<reference key="6">
    <citation type="journal article" date="2015" name="Proc. Natl. Acad. Sci. U.S.A.">
        <title>Major reorientation of tRNA substrates defines specificity of dihydrouridine synthases.</title>
        <authorList>
            <person name="Byrne R.T."/>
            <person name="Jenkins H.T."/>
            <person name="Peters D.T."/>
            <person name="Whelan F."/>
            <person name="Stowell J."/>
            <person name="Aziz N."/>
            <person name="Kasatsky P."/>
            <person name="Rodnina M.V."/>
            <person name="Koonin E.V."/>
            <person name="Konevega A.L."/>
            <person name="Antson A.A."/>
        </authorList>
    </citation>
    <scope>X-RAY CRYSTALLOGRAPHY (1.65 ANGSTROMS) OF WILD-TYPE AND MUTANT ALA-98 IN COMPLEXES WITH FMN AND TWO SUBSTRATE TRNAS</scope>
    <scope>FUNCTION</scope>
    <scope>CATALYTIC ACTIVITY</scope>
    <scope>COFACTOR</scope>
    <scope>DOMAIN</scope>
    <scope>ACTIVE SITE</scope>
    <scope>MUTAGENESIS OF CYS-98</scope>
</reference>
<proteinExistence type="evidence at protein level"/>
<name>DUSC_ECOLI</name>
<sequence length="315" mass="35199">MRVLLAPMEGVLDSLVRELLTEVNDYDLCITEFVRVVDQLLPVKVFHRICPELQNASRTPSGTLVRVQLLGQFPQWLAENAARAVELGSWGVDLNCGCPSKTVNGSGGGATLLKDPELIYQGAKAMREAVPAHLPVSVKVRLGWDSGEKKFEIADAVQQAGATELVVHGRTKEQGYRAEHIDWQAIGDIRQRLNIPVIANGEIWDWQSAQQCMAISGCDAVMIGRGALNIPNLSRVVKYNEPRMPWPEVVALLQKYTRLEKQGDTGLYHVARIKQWLSYLRKEYDEATELFQHVRVLNNSPDIARAIQAIDIEKL</sequence>
<gene>
    <name evidence="2 6" type="primary">dusC</name>
    <name type="synonym">yohI</name>
    <name type="ordered locus">b2140</name>
    <name type="ordered locus">JW2128</name>
</gene>
<accession>P33371</accession>
<accession>Q2MAT9</accession>